<organism>
    <name type="scientific">Edwardsiella ictaluri (strain 93-146)</name>
    <dbReference type="NCBI Taxonomy" id="634503"/>
    <lineage>
        <taxon>Bacteria</taxon>
        <taxon>Pseudomonadati</taxon>
        <taxon>Pseudomonadota</taxon>
        <taxon>Gammaproteobacteria</taxon>
        <taxon>Enterobacterales</taxon>
        <taxon>Hafniaceae</taxon>
        <taxon>Edwardsiella</taxon>
    </lineage>
</organism>
<gene>
    <name evidence="1" type="primary">recF</name>
    <name type="ordered locus">NT01EI_0003</name>
</gene>
<keyword id="KW-0067">ATP-binding</keyword>
<keyword id="KW-0963">Cytoplasm</keyword>
<keyword id="KW-0227">DNA damage</keyword>
<keyword id="KW-0234">DNA repair</keyword>
<keyword id="KW-0235">DNA replication</keyword>
<keyword id="KW-0238">DNA-binding</keyword>
<keyword id="KW-0547">Nucleotide-binding</keyword>
<keyword id="KW-0742">SOS response</keyword>
<evidence type="ECO:0000255" key="1">
    <source>
        <dbReference type="HAMAP-Rule" id="MF_00365"/>
    </source>
</evidence>
<protein>
    <recommendedName>
        <fullName evidence="1">DNA replication and repair protein RecF</fullName>
    </recommendedName>
</protein>
<sequence>MALTRLVIRDFRNIEEADLALAPGFNFLVGANGSGKTSVLEAIYTLGHGRAFRSLQAGRVIRHDCSAFVLHGRIDDGGGRERAVGLSKDRQGDSKVRIDGSDGHKVAELAQMLPMQLITPEGFTLLNGGPKYRRAFLDWGCFHGERSFFTAWNNLRRVLKQRNAALRQVTRYAQIRPWDQELVPLAEQVSALRAAYSEAIAQDIAATCSQFLPEYALSFSFMRGWDRESDYAALLERHFERDRALTYTAQGPHKADFRIRADGTPVEDLLSRGQLKLLMCALRLAQGEYLTRHSGRQCLYLIDDFASELDAGRRRLLAERLKSTGAQVFVSAVNADQIGDMVDEKGKMFHVEQGKIAV</sequence>
<dbReference type="EMBL" id="CP001600">
    <property type="protein sequence ID" value="ACR67265.1"/>
    <property type="molecule type" value="Genomic_DNA"/>
</dbReference>
<dbReference type="RefSeq" id="WP_015869490.1">
    <property type="nucleotide sequence ID" value="NZ_CP169062.1"/>
</dbReference>
<dbReference type="SMR" id="C5BHC7"/>
<dbReference type="STRING" id="67780.B6E78_11205"/>
<dbReference type="GeneID" id="69540752"/>
<dbReference type="KEGG" id="eic:NT01EI_0003"/>
<dbReference type="PATRIC" id="fig|634503.3.peg.3"/>
<dbReference type="HOGENOM" id="CLU_040267_0_0_6"/>
<dbReference type="OrthoDB" id="9803889at2"/>
<dbReference type="Proteomes" id="UP000001485">
    <property type="component" value="Chromosome"/>
</dbReference>
<dbReference type="GO" id="GO:0005737">
    <property type="term" value="C:cytoplasm"/>
    <property type="evidence" value="ECO:0007669"/>
    <property type="project" value="UniProtKB-SubCell"/>
</dbReference>
<dbReference type="GO" id="GO:0005524">
    <property type="term" value="F:ATP binding"/>
    <property type="evidence" value="ECO:0007669"/>
    <property type="project" value="UniProtKB-UniRule"/>
</dbReference>
<dbReference type="GO" id="GO:0003697">
    <property type="term" value="F:single-stranded DNA binding"/>
    <property type="evidence" value="ECO:0007669"/>
    <property type="project" value="UniProtKB-UniRule"/>
</dbReference>
<dbReference type="GO" id="GO:0006260">
    <property type="term" value="P:DNA replication"/>
    <property type="evidence" value="ECO:0007669"/>
    <property type="project" value="UniProtKB-UniRule"/>
</dbReference>
<dbReference type="GO" id="GO:0000731">
    <property type="term" value="P:DNA synthesis involved in DNA repair"/>
    <property type="evidence" value="ECO:0007669"/>
    <property type="project" value="TreeGrafter"/>
</dbReference>
<dbReference type="GO" id="GO:0006302">
    <property type="term" value="P:double-strand break repair"/>
    <property type="evidence" value="ECO:0007669"/>
    <property type="project" value="TreeGrafter"/>
</dbReference>
<dbReference type="GO" id="GO:0009432">
    <property type="term" value="P:SOS response"/>
    <property type="evidence" value="ECO:0007669"/>
    <property type="project" value="UniProtKB-UniRule"/>
</dbReference>
<dbReference type="FunFam" id="1.20.1050.90:FF:000001">
    <property type="entry name" value="DNA replication and repair protein RecF"/>
    <property type="match status" value="1"/>
</dbReference>
<dbReference type="Gene3D" id="3.40.50.300">
    <property type="entry name" value="P-loop containing nucleotide triphosphate hydrolases"/>
    <property type="match status" value="1"/>
</dbReference>
<dbReference type="Gene3D" id="1.20.1050.90">
    <property type="entry name" value="RecF/RecN/SMC, N-terminal domain"/>
    <property type="match status" value="1"/>
</dbReference>
<dbReference type="HAMAP" id="MF_00365">
    <property type="entry name" value="RecF"/>
    <property type="match status" value="1"/>
</dbReference>
<dbReference type="InterPro" id="IPR001238">
    <property type="entry name" value="DNA-binding_RecF"/>
</dbReference>
<dbReference type="InterPro" id="IPR018078">
    <property type="entry name" value="DNA-binding_RecF_CS"/>
</dbReference>
<dbReference type="InterPro" id="IPR027417">
    <property type="entry name" value="P-loop_NTPase"/>
</dbReference>
<dbReference type="InterPro" id="IPR003395">
    <property type="entry name" value="RecF/RecN/SMC_N"/>
</dbReference>
<dbReference type="InterPro" id="IPR042174">
    <property type="entry name" value="RecF_2"/>
</dbReference>
<dbReference type="NCBIfam" id="TIGR00611">
    <property type="entry name" value="recf"/>
    <property type="match status" value="1"/>
</dbReference>
<dbReference type="PANTHER" id="PTHR32182">
    <property type="entry name" value="DNA REPLICATION AND REPAIR PROTEIN RECF"/>
    <property type="match status" value="1"/>
</dbReference>
<dbReference type="PANTHER" id="PTHR32182:SF0">
    <property type="entry name" value="DNA REPLICATION AND REPAIR PROTEIN RECF"/>
    <property type="match status" value="1"/>
</dbReference>
<dbReference type="Pfam" id="PF02463">
    <property type="entry name" value="SMC_N"/>
    <property type="match status" value="1"/>
</dbReference>
<dbReference type="SUPFAM" id="SSF52540">
    <property type="entry name" value="P-loop containing nucleoside triphosphate hydrolases"/>
    <property type="match status" value="1"/>
</dbReference>
<dbReference type="PROSITE" id="PS00617">
    <property type="entry name" value="RECF_1"/>
    <property type="match status" value="1"/>
</dbReference>
<dbReference type="PROSITE" id="PS00618">
    <property type="entry name" value="RECF_2"/>
    <property type="match status" value="1"/>
</dbReference>
<proteinExistence type="inferred from homology"/>
<accession>C5BHC7</accession>
<name>RECF_EDWI9</name>
<comment type="function">
    <text evidence="1">The RecF protein is involved in DNA metabolism; it is required for DNA replication and normal SOS inducibility. RecF binds preferentially to single-stranded, linear DNA. It also seems to bind ATP.</text>
</comment>
<comment type="subcellular location">
    <subcellularLocation>
        <location evidence="1">Cytoplasm</location>
    </subcellularLocation>
</comment>
<comment type="similarity">
    <text evidence="1">Belongs to the RecF family.</text>
</comment>
<feature type="chain" id="PRO_1000205481" description="DNA replication and repair protein RecF">
    <location>
        <begin position="1"/>
        <end position="358"/>
    </location>
</feature>
<feature type="binding site" evidence="1">
    <location>
        <begin position="30"/>
        <end position="37"/>
    </location>
    <ligand>
        <name>ATP</name>
        <dbReference type="ChEBI" id="CHEBI:30616"/>
    </ligand>
</feature>
<reference key="1">
    <citation type="submission" date="2009-03" db="EMBL/GenBank/DDBJ databases">
        <title>Complete genome sequence of Edwardsiella ictaluri 93-146.</title>
        <authorList>
            <person name="Williams M.L."/>
            <person name="Gillaspy A.F."/>
            <person name="Dyer D.W."/>
            <person name="Thune R.L."/>
            <person name="Waldbieser G.C."/>
            <person name="Schuster S.C."/>
            <person name="Gipson J."/>
            <person name="Zaitshik J."/>
            <person name="Landry C."/>
            <person name="Lawrence M.L."/>
        </authorList>
    </citation>
    <scope>NUCLEOTIDE SEQUENCE [LARGE SCALE GENOMIC DNA]</scope>
    <source>
        <strain>93-146</strain>
    </source>
</reference>